<reference key="1">
    <citation type="journal article" date="2009" name="Proc. Natl. Acad. Sci. U.S.A.">
        <title>Biogeography of the Sulfolobus islandicus pan-genome.</title>
        <authorList>
            <person name="Reno M.L."/>
            <person name="Held N.L."/>
            <person name="Fields C.J."/>
            <person name="Burke P.V."/>
            <person name="Whitaker R.J."/>
        </authorList>
    </citation>
    <scope>NUCLEOTIDE SEQUENCE [LARGE SCALE GENOMIC DNA]</scope>
    <source>
        <strain>L.S.2.15 / Lassen #1</strain>
    </source>
</reference>
<keyword id="KW-0687">Ribonucleoprotein</keyword>
<keyword id="KW-0689">Ribosomal protein</keyword>
<keyword id="KW-0694">RNA-binding</keyword>
<keyword id="KW-0699">rRNA-binding</keyword>
<protein>
    <recommendedName>
        <fullName evidence="1">Small ribosomal subunit protein eS4</fullName>
    </recommendedName>
    <alternativeName>
        <fullName evidence="2">30S ribosomal protein S4e</fullName>
    </alternativeName>
</protein>
<proteinExistence type="inferred from homology"/>
<organism>
    <name type="scientific">Saccharolobus islandicus (strain L.S.2.15 / Lassen #1)</name>
    <name type="common">Sulfolobus islandicus</name>
    <dbReference type="NCBI Taxonomy" id="429572"/>
    <lineage>
        <taxon>Archaea</taxon>
        <taxon>Thermoproteota</taxon>
        <taxon>Thermoprotei</taxon>
        <taxon>Sulfolobales</taxon>
        <taxon>Sulfolobaceae</taxon>
        <taxon>Saccharolobus</taxon>
    </lineage>
</organism>
<comment type="similarity">
    <text evidence="1">Belongs to the eukaryotic ribosomal protein eS4 family.</text>
</comment>
<dbReference type="EMBL" id="CP001399">
    <property type="protein sequence ID" value="ACP35534.1"/>
    <property type="molecule type" value="Genomic_DNA"/>
</dbReference>
<dbReference type="RefSeq" id="WP_012711430.1">
    <property type="nucleotide sequence ID" value="NC_012589.1"/>
</dbReference>
<dbReference type="SMR" id="C3MQ71"/>
<dbReference type="KEGG" id="sis:LS215_1527"/>
<dbReference type="HOGENOM" id="CLU_060400_0_0_2"/>
<dbReference type="OrthoDB" id="372073at2157"/>
<dbReference type="Proteomes" id="UP000001747">
    <property type="component" value="Chromosome"/>
</dbReference>
<dbReference type="GO" id="GO:0022627">
    <property type="term" value="C:cytosolic small ribosomal subunit"/>
    <property type="evidence" value="ECO:0007669"/>
    <property type="project" value="TreeGrafter"/>
</dbReference>
<dbReference type="GO" id="GO:0019843">
    <property type="term" value="F:rRNA binding"/>
    <property type="evidence" value="ECO:0007669"/>
    <property type="project" value="UniProtKB-KW"/>
</dbReference>
<dbReference type="GO" id="GO:0003735">
    <property type="term" value="F:structural constituent of ribosome"/>
    <property type="evidence" value="ECO:0007669"/>
    <property type="project" value="InterPro"/>
</dbReference>
<dbReference type="GO" id="GO:0006412">
    <property type="term" value="P:translation"/>
    <property type="evidence" value="ECO:0007669"/>
    <property type="project" value="UniProtKB-UniRule"/>
</dbReference>
<dbReference type="CDD" id="cd06087">
    <property type="entry name" value="KOW_RPS4"/>
    <property type="match status" value="1"/>
</dbReference>
<dbReference type="CDD" id="cd00165">
    <property type="entry name" value="S4"/>
    <property type="match status" value="1"/>
</dbReference>
<dbReference type="FunFam" id="2.30.30.30:FF:000069">
    <property type="entry name" value="30S ribosomal protein S4e"/>
    <property type="match status" value="1"/>
</dbReference>
<dbReference type="FunFam" id="3.10.290.10:FF:000002">
    <property type="entry name" value="40S ribosomal protein S4"/>
    <property type="match status" value="1"/>
</dbReference>
<dbReference type="Gene3D" id="2.30.30.30">
    <property type="match status" value="1"/>
</dbReference>
<dbReference type="Gene3D" id="2.40.50.740">
    <property type="match status" value="1"/>
</dbReference>
<dbReference type="Gene3D" id="3.10.290.10">
    <property type="entry name" value="RNA-binding S4 domain"/>
    <property type="match status" value="1"/>
</dbReference>
<dbReference type="HAMAP" id="MF_00485">
    <property type="entry name" value="Ribosomal_eS4"/>
    <property type="match status" value="1"/>
</dbReference>
<dbReference type="InterPro" id="IPR014722">
    <property type="entry name" value="Rib_uL2_dom2"/>
</dbReference>
<dbReference type="InterPro" id="IPR000876">
    <property type="entry name" value="Ribosomal_eS4"/>
</dbReference>
<dbReference type="InterPro" id="IPR013845">
    <property type="entry name" value="Ribosomal_eS4_central_region"/>
</dbReference>
<dbReference type="InterPro" id="IPR038237">
    <property type="entry name" value="Ribosomal_eS4_central_sf"/>
</dbReference>
<dbReference type="InterPro" id="IPR041982">
    <property type="entry name" value="Ribosomal_eS4_KOW"/>
</dbReference>
<dbReference type="InterPro" id="IPR002942">
    <property type="entry name" value="S4_RNA-bd"/>
</dbReference>
<dbReference type="InterPro" id="IPR036986">
    <property type="entry name" value="S4_RNA-bd_sf"/>
</dbReference>
<dbReference type="NCBIfam" id="NF003312">
    <property type="entry name" value="PRK04313.1"/>
    <property type="match status" value="1"/>
</dbReference>
<dbReference type="PANTHER" id="PTHR11581">
    <property type="entry name" value="30S/40S RIBOSOMAL PROTEIN S4"/>
    <property type="match status" value="1"/>
</dbReference>
<dbReference type="PANTHER" id="PTHR11581:SF0">
    <property type="entry name" value="SMALL RIBOSOMAL SUBUNIT PROTEIN ES4"/>
    <property type="match status" value="1"/>
</dbReference>
<dbReference type="Pfam" id="PF00900">
    <property type="entry name" value="Ribosomal_S4e"/>
    <property type="match status" value="1"/>
</dbReference>
<dbReference type="Pfam" id="PF01479">
    <property type="entry name" value="S4"/>
    <property type="match status" value="1"/>
</dbReference>
<dbReference type="PIRSF" id="PIRSF002116">
    <property type="entry name" value="Ribosomal_S4"/>
    <property type="match status" value="1"/>
</dbReference>
<dbReference type="SMART" id="SM00363">
    <property type="entry name" value="S4"/>
    <property type="match status" value="1"/>
</dbReference>
<dbReference type="SUPFAM" id="SSF55174">
    <property type="entry name" value="Alpha-L RNA-binding motif"/>
    <property type="match status" value="1"/>
</dbReference>
<dbReference type="PROSITE" id="PS50889">
    <property type="entry name" value="S4"/>
    <property type="match status" value="1"/>
</dbReference>
<accession>C3MQ71</accession>
<name>RS4E_SACI2</name>
<feature type="chain" id="PRO_1000206439" description="Small ribosomal subunit protein eS4">
    <location>
        <begin position="1"/>
        <end position="239"/>
    </location>
</feature>
<feature type="domain" description="S4 RNA-binding" evidence="1">
    <location>
        <begin position="37"/>
        <end position="99"/>
    </location>
</feature>
<gene>
    <name evidence="1" type="primary">rps4e</name>
    <name type="ordered locus">LS215_1527</name>
</gene>
<evidence type="ECO:0000255" key="1">
    <source>
        <dbReference type="HAMAP-Rule" id="MF_00485"/>
    </source>
</evidence>
<evidence type="ECO:0000305" key="2"/>
<sequence length="239" mass="27201">MAHITRFETPWFLVISKKQYKWTVRPNAGPHPIEKSIPLAVVIRDYLKLAETVREAKHIIFDGKVLVDGKVRKDYKYPVGLMDIVSIPSADLYFRVIPDNVRFMRLSKISADEAHYKYVRIMNKTTVKGGSIQLNLEDGRNILVDKETAKSFKTLMTLKIELPSQNIVDSFIISEGSYAIFVGGKNVGIHGVVKNINLSKFKSRKYSVITLESKDGNTYQTNLMNVMSIGREKSDMRVD</sequence>